<gene>
    <name evidence="1" type="primary">tdk</name>
    <name type="ordered locus">MW2043</name>
</gene>
<organism>
    <name type="scientific">Staphylococcus aureus (strain MW2)</name>
    <dbReference type="NCBI Taxonomy" id="196620"/>
    <lineage>
        <taxon>Bacteria</taxon>
        <taxon>Bacillati</taxon>
        <taxon>Bacillota</taxon>
        <taxon>Bacilli</taxon>
        <taxon>Bacillales</taxon>
        <taxon>Staphylococcaceae</taxon>
        <taxon>Staphylococcus</taxon>
    </lineage>
</organism>
<keyword id="KW-0067">ATP-binding</keyword>
<keyword id="KW-0963">Cytoplasm</keyword>
<keyword id="KW-0237">DNA synthesis</keyword>
<keyword id="KW-0418">Kinase</keyword>
<keyword id="KW-0479">Metal-binding</keyword>
<keyword id="KW-0547">Nucleotide-binding</keyword>
<keyword id="KW-0808">Transferase</keyword>
<keyword id="KW-0862">Zinc</keyword>
<feature type="chain" id="PRO_0000175023" description="Thymidine kinase">
    <location>
        <begin position="1"/>
        <end position="199"/>
    </location>
</feature>
<feature type="active site" description="Proton acceptor" evidence="1">
    <location>
        <position position="89"/>
    </location>
</feature>
<feature type="binding site" evidence="1">
    <location>
        <begin position="15"/>
        <end position="22"/>
    </location>
    <ligand>
        <name>ATP</name>
        <dbReference type="ChEBI" id="CHEBI:30616"/>
    </ligand>
</feature>
<feature type="binding site" evidence="1">
    <location>
        <begin position="88"/>
        <end position="91"/>
    </location>
    <ligand>
        <name>ATP</name>
        <dbReference type="ChEBI" id="CHEBI:30616"/>
    </ligand>
</feature>
<feature type="binding site" evidence="1">
    <location>
        <position position="145"/>
    </location>
    <ligand>
        <name>Zn(2+)</name>
        <dbReference type="ChEBI" id="CHEBI:29105"/>
    </ligand>
</feature>
<feature type="binding site" evidence="1">
    <location>
        <position position="148"/>
    </location>
    <ligand>
        <name>Zn(2+)</name>
        <dbReference type="ChEBI" id="CHEBI:29105"/>
    </ligand>
</feature>
<feature type="binding site" evidence="1">
    <location>
        <position position="183"/>
    </location>
    <ligand>
        <name>Zn(2+)</name>
        <dbReference type="ChEBI" id="CHEBI:29105"/>
    </ligand>
</feature>
<feature type="binding site" evidence="1">
    <location>
        <position position="186"/>
    </location>
    <ligand>
        <name>Zn(2+)</name>
        <dbReference type="ChEBI" id="CHEBI:29105"/>
    </ligand>
</feature>
<protein>
    <recommendedName>
        <fullName evidence="1">Thymidine kinase</fullName>
        <ecNumber evidence="1">2.7.1.21</ecNumber>
    </recommendedName>
</protein>
<sequence length="199" mass="22214">MYETYHSGWIECITGSMFSGKSEELIRRLRRGIYAKQKVVVFKPAIDDRYHKEKVVSHNGNAIEAINISKASEIMTHDLTNVDVIGIDEVQFFDDEIVSIVEKLSADGHRVIVAGLDMDFRGEPFEPMPKLMAVSEQVTKLQAVCAVCGSSSSRTQRLINGKPAKIDDPIILVGANESYEPRCRAHHIVAPSDNNKEEL</sequence>
<reference key="1">
    <citation type="journal article" date="2002" name="Lancet">
        <title>Genome and virulence determinants of high virulence community-acquired MRSA.</title>
        <authorList>
            <person name="Baba T."/>
            <person name="Takeuchi F."/>
            <person name="Kuroda M."/>
            <person name="Yuzawa H."/>
            <person name="Aoki K."/>
            <person name="Oguchi A."/>
            <person name="Nagai Y."/>
            <person name="Iwama N."/>
            <person name="Asano K."/>
            <person name="Naimi T."/>
            <person name="Kuroda H."/>
            <person name="Cui L."/>
            <person name="Yamamoto K."/>
            <person name="Hiramatsu K."/>
        </authorList>
    </citation>
    <scope>NUCLEOTIDE SEQUENCE [LARGE SCALE GENOMIC DNA]</scope>
    <source>
        <strain>MW2</strain>
    </source>
</reference>
<evidence type="ECO:0000255" key="1">
    <source>
        <dbReference type="HAMAP-Rule" id="MF_00124"/>
    </source>
</evidence>
<accession>Q8NVG5</accession>
<dbReference type="EC" id="2.7.1.21" evidence="1"/>
<dbReference type="EMBL" id="BA000033">
    <property type="protein sequence ID" value="BAB95908.1"/>
    <property type="molecule type" value="Genomic_DNA"/>
</dbReference>
<dbReference type="RefSeq" id="WP_000273356.1">
    <property type="nucleotide sequence ID" value="NC_003923.1"/>
</dbReference>
<dbReference type="SMR" id="Q8NVG5"/>
<dbReference type="KEGG" id="sam:MW2043"/>
<dbReference type="HOGENOM" id="CLU_064400_3_0_9"/>
<dbReference type="GO" id="GO:0005829">
    <property type="term" value="C:cytosol"/>
    <property type="evidence" value="ECO:0007669"/>
    <property type="project" value="TreeGrafter"/>
</dbReference>
<dbReference type="GO" id="GO:0005524">
    <property type="term" value="F:ATP binding"/>
    <property type="evidence" value="ECO:0007669"/>
    <property type="project" value="UniProtKB-UniRule"/>
</dbReference>
<dbReference type="GO" id="GO:0004797">
    <property type="term" value="F:thymidine kinase activity"/>
    <property type="evidence" value="ECO:0007669"/>
    <property type="project" value="UniProtKB-UniRule"/>
</dbReference>
<dbReference type="GO" id="GO:0008270">
    <property type="term" value="F:zinc ion binding"/>
    <property type="evidence" value="ECO:0007669"/>
    <property type="project" value="UniProtKB-UniRule"/>
</dbReference>
<dbReference type="GO" id="GO:0071897">
    <property type="term" value="P:DNA biosynthetic process"/>
    <property type="evidence" value="ECO:0007669"/>
    <property type="project" value="UniProtKB-KW"/>
</dbReference>
<dbReference type="GO" id="GO:0046104">
    <property type="term" value="P:thymidine metabolic process"/>
    <property type="evidence" value="ECO:0007669"/>
    <property type="project" value="TreeGrafter"/>
</dbReference>
<dbReference type="FunFam" id="3.30.60.20:FF:000026">
    <property type="entry name" value="Thymidine kinase"/>
    <property type="match status" value="1"/>
</dbReference>
<dbReference type="FunFam" id="3.40.50.300:FF:000384">
    <property type="entry name" value="Thymidine kinase"/>
    <property type="match status" value="1"/>
</dbReference>
<dbReference type="Gene3D" id="3.30.60.20">
    <property type="match status" value="1"/>
</dbReference>
<dbReference type="Gene3D" id="3.40.50.300">
    <property type="entry name" value="P-loop containing nucleotide triphosphate hydrolases"/>
    <property type="match status" value="1"/>
</dbReference>
<dbReference type="HAMAP" id="MF_00124">
    <property type="entry name" value="Thymidine_kinase"/>
    <property type="match status" value="1"/>
</dbReference>
<dbReference type="InterPro" id="IPR027417">
    <property type="entry name" value="P-loop_NTPase"/>
</dbReference>
<dbReference type="InterPro" id="IPR001267">
    <property type="entry name" value="Thymidine_kinase"/>
</dbReference>
<dbReference type="InterPro" id="IPR020633">
    <property type="entry name" value="Thymidine_kinase_CS"/>
</dbReference>
<dbReference type="NCBIfam" id="NF003296">
    <property type="entry name" value="PRK04296.1-1"/>
    <property type="match status" value="1"/>
</dbReference>
<dbReference type="PANTHER" id="PTHR11441">
    <property type="entry name" value="THYMIDINE KINASE"/>
    <property type="match status" value="1"/>
</dbReference>
<dbReference type="PANTHER" id="PTHR11441:SF0">
    <property type="entry name" value="THYMIDINE KINASE, CYTOSOLIC"/>
    <property type="match status" value="1"/>
</dbReference>
<dbReference type="Pfam" id="PF00265">
    <property type="entry name" value="TK"/>
    <property type="match status" value="1"/>
</dbReference>
<dbReference type="PIRSF" id="PIRSF035805">
    <property type="entry name" value="TK_cell"/>
    <property type="match status" value="1"/>
</dbReference>
<dbReference type="SUPFAM" id="SSF57716">
    <property type="entry name" value="Glucocorticoid receptor-like (DNA-binding domain)"/>
    <property type="match status" value="1"/>
</dbReference>
<dbReference type="SUPFAM" id="SSF52540">
    <property type="entry name" value="P-loop containing nucleoside triphosphate hydrolases"/>
    <property type="match status" value="1"/>
</dbReference>
<dbReference type="PROSITE" id="PS00603">
    <property type="entry name" value="TK_CELLULAR_TYPE"/>
    <property type="match status" value="1"/>
</dbReference>
<comment type="catalytic activity">
    <reaction evidence="1">
        <text>thymidine + ATP = dTMP + ADP + H(+)</text>
        <dbReference type="Rhea" id="RHEA:19129"/>
        <dbReference type="ChEBI" id="CHEBI:15378"/>
        <dbReference type="ChEBI" id="CHEBI:17748"/>
        <dbReference type="ChEBI" id="CHEBI:30616"/>
        <dbReference type="ChEBI" id="CHEBI:63528"/>
        <dbReference type="ChEBI" id="CHEBI:456216"/>
        <dbReference type="EC" id="2.7.1.21"/>
    </reaction>
</comment>
<comment type="subunit">
    <text evidence="1">Homotetramer.</text>
</comment>
<comment type="subcellular location">
    <subcellularLocation>
        <location evidence="1">Cytoplasm</location>
    </subcellularLocation>
</comment>
<comment type="similarity">
    <text evidence="1">Belongs to the thymidine kinase family.</text>
</comment>
<proteinExistence type="inferred from homology"/>
<name>KITH_STAAW</name>